<protein>
    <recommendedName>
        <fullName evidence="3">U15-myrmicitoxin-Tb1b</fullName>
        <shortName evidence="3">U15-MYRTX-Tb1b</shortName>
    </recommendedName>
</protein>
<reference evidence="5" key="1">
    <citation type="journal article" date="2018" name="J. Proteome Res.">
        <title>Deciphering the Molecular Diversity of an Ant Venom Peptidome through a Venomics Approach.</title>
        <authorList>
            <person name="Touchard A."/>
            <person name="Tene N."/>
            <person name="Song P.C.T."/>
            <person name="Lefranc B."/>
            <person name="Leprince J."/>
            <person name="Treilhou M."/>
            <person name="Bonnafe E."/>
        </authorList>
    </citation>
    <scope>NUCLEOTIDE SEQUENCE [MRNA]</scope>
    <scope>SUBCELLULAR LOCATION</scope>
    <scope>MASS SPECTROMETRY</scope>
    <scope>AMIDATION AT HIS-40</scope>
    <source>
        <tissue>Venom</tissue>
        <tissue>Venom gland</tissue>
    </source>
</reference>
<reference key="2">
    <citation type="journal article" date="2023" name="Toxins">
        <title>Discovery of an insect neuroactive helix ring peptide from ant venom.</title>
        <authorList>
            <person name="Barasse V."/>
            <person name="Jouvensal L."/>
            <person name="Boy G."/>
            <person name="Billet A."/>
            <person name="Ascoet S."/>
            <person name="Lefranc B."/>
            <person name="Leprince J."/>
            <person name="Dejean A."/>
            <person name="Lacotte V."/>
            <person name="Rahioui I."/>
            <person name="Sivignon C."/>
            <person name="Gaget K."/>
            <person name="Ribeiro Lopes M."/>
            <person name="Calevro F."/>
            <person name="Da Silva P."/>
            <person name="Loth K."/>
            <person name="Paquet F."/>
            <person name="Treilhou M."/>
            <person name="Bonnafe E."/>
            <person name="Touchard A."/>
        </authorList>
    </citation>
    <scope>SYNTHESIS OF 26-40</scope>
</reference>
<keyword id="KW-0027">Amidation</keyword>
<keyword id="KW-0964">Secreted</keyword>
<keyword id="KW-0732">Signal</keyword>
<comment type="function">
    <text evidence="2">Venom protein with unknown function. Does not induce paralysis when a high dose is administered by intrathoracic injection into the blowfly Lucilia caesar.</text>
</comment>
<comment type="subcellular location">
    <subcellularLocation>
        <location evidence="1">Secreted</location>
    </subcellularLocation>
</comment>
<comment type="tissue specificity">
    <text evidence="1">Expressed by the venom gland.</text>
</comment>
<comment type="mass spectrometry"/>
<organism>
    <name type="scientific">Tetramorium bicarinatum</name>
    <name type="common">Tramp ant</name>
    <dbReference type="NCBI Taxonomy" id="219812"/>
    <lineage>
        <taxon>Eukaryota</taxon>
        <taxon>Metazoa</taxon>
        <taxon>Ecdysozoa</taxon>
        <taxon>Arthropoda</taxon>
        <taxon>Hexapoda</taxon>
        <taxon>Insecta</taxon>
        <taxon>Pterygota</taxon>
        <taxon>Neoptera</taxon>
        <taxon>Endopterygota</taxon>
        <taxon>Hymenoptera</taxon>
        <taxon>Apocrita</taxon>
        <taxon>Aculeata</taxon>
        <taxon>Formicoidea</taxon>
        <taxon>Formicidae</taxon>
        <taxon>Myrmicinae</taxon>
        <taxon>Tetramorium</taxon>
    </lineage>
</organism>
<accession>A0A6M3Z4L2</accession>
<name>TX15B_TETBN</name>
<dbReference type="EMBL" id="MN397950">
    <property type="protein sequence ID" value="QJP03497.1"/>
    <property type="molecule type" value="mRNA"/>
</dbReference>
<dbReference type="SMR" id="A0A6M3Z4L2"/>
<dbReference type="GO" id="GO:0005576">
    <property type="term" value="C:extracellular region"/>
    <property type="evidence" value="ECO:0000314"/>
    <property type="project" value="UniProtKB"/>
</dbReference>
<evidence type="ECO:0000269" key="1">
    <source>
    </source>
</evidence>
<evidence type="ECO:0000269" key="2">
    <source>
    </source>
</evidence>
<evidence type="ECO:0000303" key="3">
    <source>
    </source>
</evidence>
<evidence type="ECO:0000305" key="4"/>
<evidence type="ECO:0000312" key="5">
    <source>
        <dbReference type="EMBL" id="QJP03497.1"/>
    </source>
</evidence>
<sequence>MKIVKLITIFAMIATLMVTVTNGEAVFLTPDQIKAMIKRHG</sequence>
<proteinExistence type="evidence at protein level"/>
<feature type="signal peptide" evidence="4">
    <location>
        <begin position="1"/>
        <end position="25"/>
    </location>
</feature>
<feature type="peptide" id="PRO_0000459812" description="U15-myrmicitoxin-Tb1b" evidence="1">
    <location>
        <begin position="26"/>
        <end position="40"/>
    </location>
</feature>
<feature type="modified residue" description="Histidine amide" evidence="1">
    <location>
        <position position="40"/>
    </location>
</feature>